<comment type="function">
    <text evidence="11 12">Involved in anterograde intraflagellar transport (IFT) (Probable). Involved in flagellar assembly (Probable).</text>
</comment>
<comment type="subcellular location">
    <subcellularLocation>
        <location evidence="4 6">Cell projection</location>
        <location evidence="4 6">Cilium</location>
        <location evidence="4 6">Flagellum</location>
    </subcellularLocation>
    <subcellularLocation>
        <location evidence="4 6">Cytoplasm</location>
        <location evidence="4 6">Cytoskeleton</location>
        <location evidence="4 6">Flagellum axoneme</location>
    </subcellularLocation>
    <subcellularLocation>
        <location evidence="6">Cytoplasm</location>
        <location evidence="6">Cytoskeleton</location>
        <location evidence="6">Flagellum basal body</location>
    </subcellularLocation>
    <text evidence="4 6">Localizes to the cytoplasmic and membrane-bound portions of each of the eight axonemes, localizing particularly at the flagellar pores and at the distal flagellar tips (PubMed:18463165, PubMed:31855176). Localizes at a lower level to the cytoplasmic axonemes and to the basal bodies (PubMed:31855176).</text>
</comment>
<comment type="disruption phenotype">
    <text evidence="5">Morpholino knockdown results in aberrant cytoskeletons. Most often the external portions of the caudal and posteriolateral flagella are missing with only cytoplasmic axonemes remaining, but in some cells all four sets of flagella are defective along with missing or reduced median bodies.</text>
</comment>
<comment type="similarity">
    <text evidence="10">Belongs to the TRAFAC class myosin-kinesin ATPase superfamily. Kinesin family. Kinesin II subfamily.</text>
</comment>
<organism evidence="13">
    <name type="scientific">Giardia intestinalis (strain ATCC 50803 / WB clone C6)</name>
    <name type="common">Giardia lamblia</name>
    <dbReference type="NCBI Taxonomy" id="184922"/>
    <lineage>
        <taxon>Eukaryota</taxon>
        <taxon>Metamonada</taxon>
        <taxon>Diplomonadida</taxon>
        <taxon>Hexamitidae</taxon>
        <taxon>Giardiinae</taxon>
        <taxon>Giardia</taxon>
    </lineage>
</organism>
<dbReference type="EMBL" id="AACB02000009">
    <property type="protein sequence ID" value="EDO80562.1"/>
    <property type="molecule type" value="Genomic_DNA"/>
</dbReference>
<dbReference type="EMBL" id="AACB03000004">
    <property type="protein sequence ID" value="KAE8302057.1"/>
    <property type="molecule type" value="Genomic_DNA"/>
</dbReference>
<dbReference type="RefSeq" id="XP_001708236.1">
    <property type="nucleotide sequence ID" value="XM_001708184.1"/>
</dbReference>
<dbReference type="SMR" id="A8BB91"/>
<dbReference type="FunCoup" id="A8BB91">
    <property type="interactions" value="87"/>
</dbReference>
<dbReference type="STRING" id="184922.A8BB91"/>
<dbReference type="EnsemblProtists" id="EDO80562">
    <property type="protein sequence ID" value="EDO80562"/>
    <property type="gene ID" value="GL50803_16456"/>
</dbReference>
<dbReference type="GeneID" id="5701146"/>
<dbReference type="KEGG" id="gla:GL50803_0016456"/>
<dbReference type="VEuPathDB" id="GiardiaDB:GL50803_16456"/>
<dbReference type="HOGENOM" id="CLU_001485_22_4_1"/>
<dbReference type="InParanoid" id="A8BB91"/>
<dbReference type="OMA" id="DMIRVMK"/>
<dbReference type="Proteomes" id="UP000001548">
    <property type="component" value="Chromosome 2"/>
</dbReference>
<dbReference type="GO" id="GO:0097729">
    <property type="term" value="C:9+2 motile cilium"/>
    <property type="evidence" value="ECO:0000314"/>
    <property type="project" value="UniProtKB"/>
</dbReference>
<dbReference type="GO" id="GO:0005930">
    <property type="term" value="C:axoneme"/>
    <property type="evidence" value="ECO:0000314"/>
    <property type="project" value="UniProtKB"/>
</dbReference>
<dbReference type="GO" id="GO:0036064">
    <property type="term" value="C:ciliary basal body"/>
    <property type="evidence" value="ECO:0000314"/>
    <property type="project" value="UniProtKB"/>
</dbReference>
<dbReference type="GO" id="GO:1990900">
    <property type="term" value="C:ciliary pocket collar"/>
    <property type="evidence" value="ECO:0000314"/>
    <property type="project" value="UniProtKB"/>
</dbReference>
<dbReference type="GO" id="GO:0097542">
    <property type="term" value="C:ciliary tip"/>
    <property type="evidence" value="ECO:0000314"/>
    <property type="project" value="UniProtKB"/>
</dbReference>
<dbReference type="GO" id="GO:0005737">
    <property type="term" value="C:cytoplasm"/>
    <property type="evidence" value="ECO:0000318"/>
    <property type="project" value="GO_Central"/>
</dbReference>
<dbReference type="GO" id="GO:0005871">
    <property type="term" value="C:kinesin complex"/>
    <property type="evidence" value="ECO:0000318"/>
    <property type="project" value="GO_Central"/>
</dbReference>
<dbReference type="GO" id="GO:0005874">
    <property type="term" value="C:microtubule"/>
    <property type="evidence" value="ECO:0000318"/>
    <property type="project" value="GO_Central"/>
</dbReference>
<dbReference type="GO" id="GO:0043531">
    <property type="term" value="F:ADP binding"/>
    <property type="evidence" value="ECO:0000250"/>
    <property type="project" value="UniProtKB"/>
</dbReference>
<dbReference type="GO" id="GO:0005524">
    <property type="term" value="F:ATP binding"/>
    <property type="evidence" value="ECO:0007669"/>
    <property type="project" value="UniProtKB-KW"/>
</dbReference>
<dbReference type="GO" id="GO:0016887">
    <property type="term" value="F:ATP hydrolysis activity"/>
    <property type="evidence" value="ECO:0000318"/>
    <property type="project" value="GO_Central"/>
</dbReference>
<dbReference type="GO" id="GO:0000287">
    <property type="term" value="F:magnesium ion binding"/>
    <property type="evidence" value="ECO:0000250"/>
    <property type="project" value="UniProtKB"/>
</dbReference>
<dbReference type="GO" id="GO:0008017">
    <property type="term" value="F:microtubule binding"/>
    <property type="evidence" value="ECO:0000318"/>
    <property type="project" value="GO_Central"/>
</dbReference>
<dbReference type="GO" id="GO:0003777">
    <property type="term" value="F:microtubule motor activity"/>
    <property type="evidence" value="ECO:0000318"/>
    <property type="project" value="GO_Central"/>
</dbReference>
<dbReference type="GO" id="GO:0008574">
    <property type="term" value="F:plus-end-directed microtubule motor activity"/>
    <property type="evidence" value="ECO:0000305"/>
    <property type="project" value="UniProtKB"/>
</dbReference>
<dbReference type="GO" id="GO:0030705">
    <property type="term" value="P:cytoskeleton-dependent intracellular transport"/>
    <property type="evidence" value="ECO:0000315"/>
    <property type="project" value="UniProtKB"/>
</dbReference>
<dbReference type="GO" id="GO:0035720">
    <property type="term" value="P:intraciliary anterograde transport"/>
    <property type="evidence" value="ECO:0000305"/>
    <property type="project" value="UniProtKB"/>
</dbReference>
<dbReference type="GO" id="GO:0035735">
    <property type="term" value="P:intraciliary transport involved in cilium assembly"/>
    <property type="evidence" value="ECO:0000315"/>
    <property type="project" value="UniProtKB"/>
</dbReference>
<dbReference type="GO" id="GO:0007018">
    <property type="term" value="P:microtubule-based movement"/>
    <property type="evidence" value="ECO:0000318"/>
    <property type="project" value="GO_Central"/>
</dbReference>
<dbReference type="GO" id="GO:0010970">
    <property type="term" value="P:transport along microtubule"/>
    <property type="evidence" value="ECO:0000305"/>
    <property type="project" value="UniProtKB"/>
</dbReference>
<dbReference type="FunFam" id="3.40.850.10:FF:000082">
    <property type="entry name" value="OSM3-like kinesin"/>
    <property type="match status" value="1"/>
</dbReference>
<dbReference type="Gene3D" id="3.40.850.10">
    <property type="entry name" value="Kinesin motor domain"/>
    <property type="match status" value="1"/>
</dbReference>
<dbReference type="InterPro" id="IPR027640">
    <property type="entry name" value="Kinesin-like_fam"/>
</dbReference>
<dbReference type="InterPro" id="IPR019821">
    <property type="entry name" value="Kinesin_motor_CS"/>
</dbReference>
<dbReference type="InterPro" id="IPR001752">
    <property type="entry name" value="Kinesin_motor_dom"/>
</dbReference>
<dbReference type="InterPro" id="IPR036961">
    <property type="entry name" value="Kinesin_motor_dom_sf"/>
</dbReference>
<dbReference type="InterPro" id="IPR027417">
    <property type="entry name" value="P-loop_NTPase"/>
</dbReference>
<dbReference type="PANTHER" id="PTHR47969">
    <property type="entry name" value="CHROMOSOME-ASSOCIATED KINESIN KIF4A-RELATED"/>
    <property type="match status" value="1"/>
</dbReference>
<dbReference type="PANTHER" id="PTHR47969:SF15">
    <property type="entry name" value="CHROMOSOME-ASSOCIATED KINESIN KIF4A-RELATED"/>
    <property type="match status" value="1"/>
</dbReference>
<dbReference type="Pfam" id="PF00225">
    <property type="entry name" value="Kinesin"/>
    <property type="match status" value="1"/>
</dbReference>
<dbReference type="PRINTS" id="PR00380">
    <property type="entry name" value="KINESINHEAVY"/>
</dbReference>
<dbReference type="SMART" id="SM00129">
    <property type="entry name" value="KISc"/>
    <property type="match status" value="1"/>
</dbReference>
<dbReference type="SUPFAM" id="SSF52540">
    <property type="entry name" value="P-loop containing nucleoside triphosphate hydrolases"/>
    <property type="match status" value="1"/>
</dbReference>
<dbReference type="PROSITE" id="PS00411">
    <property type="entry name" value="KINESIN_MOTOR_1"/>
    <property type="match status" value="1"/>
</dbReference>
<dbReference type="PROSITE" id="PS50067">
    <property type="entry name" value="KINESIN_MOTOR_2"/>
    <property type="match status" value="1"/>
</dbReference>
<keyword id="KW-0067">ATP-binding</keyword>
<keyword id="KW-0966">Cell projection</keyword>
<keyword id="KW-0969">Cilium</keyword>
<keyword id="KW-0970">Cilium biogenesis/degradation</keyword>
<keyword id="KW-0175">Coiled coil</keyword>
<keyword id="KW-0963">Cytoplasm</keyword>
<keyword id="KW-0206">Cytoskeleton</keyword>
<keyword id="KW-0282">Flagellum</keyword>
<keyword id="KW-0460">Magnesium</keyword>
<keyword id="KW-0479">Metal-binding</keyword>
<keyword id="KW-0493">Microtubule</keyword>
<keyword id="KW-0505">Motor protein</keyword>
<keyword id="KW-0547">Nucleotide-binding</keyword>
<keyword id="KW-1185">Reference proteome</keyword>
<keyword id="KW-0813">Transport</keyword>
<name>KIN2B_GIAIC</name>
<sequence>MSKSKGKGSSDNVMVMVRVRPFNKREEQEGATEIIEMDKTLCTVTLHKPVEKGAGSATSECLPSKKVFTYDAVYPSNSTQVEVFDESVREMIDGCLEGYNATVFAYGQTGSGKTHTMMGQKDNPGMIPLAFQRIFDFIAQAKDDQFLVRASFVEIYNEDLKDLLTGATHLQLKEDPVKGVFIKDLSEHPVSDERHIDKLIQKGNESRAVAATLMNATSSRSHSIFQVVLERMTVIDGRECIRVGKLNLVDLAGSERQEKTGATGDRLKEAAKINLSLTTLGCVISKLVEGSKHIPYRDSKLTRLLQDSLGGNSKTLMVVAVSPASTNYDETMSTLRYADRAKQIKNKPRINEDPKDAQIREMRNYVTKLEAQLAEIMQQANAGSGSEVEDKEAYDGEGNMGAGFTGYTADEMANVQSLRKNLDKTKKKRVKYVEQRKENEEAVSAEELATLEEEQKKLEEQIKESERKAKERQLMAKKIAALIEANKSKMVDKKVLENEERLKDAAIREARNALVAQKKEAERLKKELIEAEQQRKQLEEQCTTALDQAQQLELRLNEYKEQLAERREELHNVEADQAKEREIIRNDYADQIKLCELRQFIVSMFVPEEYQRSIESIASWDEDNQAWHFRTQKSHRGMAGFG</sequence>
<protein>
    <recommendedName>
        <fullName evidence="7 8">Kinesin-2b</fullName>
        <shortName evidence="8">KIN2b</shortName>
    </recommendedName>
    <alternativeName>
        <fullName evidence="9">Anterograde kinesin-2b motor</fullName>
    </alternativeName>
    <alternativeName>
        <fullName evidence="7 8">GiKIN2b</fullName>
    </alternativeName>
    <alternativeName>
        <fullName evidence="7">Kinesin 2b homolog</fullName>
    </alternativeName>
    <alternativeName>
        <fullName evidence="7">Plus end-directed intraflagellar transport kinesin-2b motor</fullName>
        <shortName evidence="7">Plus-end directed IFT kinesin-2b motor</shortName>
    </alternativeName>
</protein>
<feature type="chain" id="PRO_0000459253" description="Kinesin-2b">
    <location>
        <begin position="1"/>
        <end position="642"/>
    </location>
</feature>
<feature type="domain" description="Kinesin motor" evidence="3">
    <location>
        <begin position="12"/>
        <end position="344"/>
    </location>
</feature>
<feature type="coiled-coil region" evidence="2">
    <location>
        <begin position="415"/>
        <end position="475"/>
    </location>
</feature>
<feature type="binding site" evidence="3">
    <location>
        <begin position="107"/>
        <end position="114"/>
    </location>
    <ligand>
        <name>ATP</name>
        <dbReference type="ChEBI" id="CHEBI:30616"/>
    </ligand>
</feature>
<feature type="binding site" evidence="1">
    <location>
        <position position="110"/>
    </location>
    <ligand>
        <name>ADP</name>
        <dbReference type="ChEBI" id="CHEBI:456216"/>
    </ligand>
</feature>
<feature type="binding site" evidence="1">
    <location>
        <position position="112"/>
    </location>
    <ligand>
        <name>ADP</name>
        <dbReference type="ChEBI" id="CHEBI:456216"/>
    </ligand>
</feature>
<feature type="binding site" evidence="1">
    <location>
        <position position="113"/>
    </location>
    <ligand>
        <name>ADP</name>
        <dbReference type="ChEBI" id="CHEBI:456216"/>
    </ligand>
</feature>
<feature type="binding site" evidence="1">
    <location>
        <position position="114"/>
    </location>
    <ligand>
        <name>ADP</name>
        <dbReference type="ChEBI" id="CHEBI:456216"/>
    </ligand>
</feature>
<feature type="binding site" evidence="1">
    <location>
        <position position="114"/>
    </location>
    <ligand>
        <name>Mg(2+)</name>
        <dbReference type="ChEBI" id="CHEBI:18420"/>
    </ligand>
</feature>
<reference evidence="13 15" key="1">
    <citation type="journal article" date="2007" name="Science">
        <title>Genomic minimalism in the early diverging intestinal parasite Giardia lamblia.</title>
        <authorList>
            <person name="Morrison H.G."/>
            <person name="McArthur A.G."/>
            <person name="Gillin F.D."/>
            <person name="Aley S.B."/>
            <person name="Adam R.D."/>
            <person name="Olsen G.J."/>
            <person name="Best A.A."/>
            <person name="Cande W.Z."/>
            <person name="Chen F."/>
            <person name="Cipriano M.J."/>
            <person name="Davids B.J."/>
            <person name="Dawson S.C."/>
            <person name="Elmendorf H.G."/>
            <person name="Hehl A.B."/>
            <person name="Holder M.E."/>
            <person name="Huse S.M."/>
            <person name="Kim U.U."/>
            <person name="Lasek-Nesselquist E."/>
            <person name="Manning G."/>
            <person name="Nigam A."/>
            <person name="Nixon J.E.J."/>
            <person name="Palm D."/>
            <person name="Passamaneck N.E."/>
            <person name="Prabhu A."/>
            <person name="Reich C.I."/>
            <person name="Reiner D.S."/>
            <person name="Samuelson J."/>
            <person name="Svard S.G."/>
            <person name="Sogin M.L."/>
        </authorList>
    </citation>
    <scope>NUCLEOTIDE SEQUENCE [LARGE SCALE GENOMIC DNA]</scope>
    <source>
        <strain evidence="15">ATCC 50803 / WB clone C6</strain>
    </source>
</reference>
<reference evidence="14" key="2">
    <citation type="submission" date="2019-07" db="EMBL/GenBank/DDBJ databases">
        <title>New Giardia intestinalis WB genome in near-complete chromosomes.</title>
        <authorList>
            <person name="Xu F."/>
            <person name="Jex A."/>
            <person name="Svard S.G."/>
        </authorList>
    </citation>
    <scope>NUCLEOTIDE SEQUENCE [LARGE SCALE GENOMIC DNA]</scope>
    <source>
        <strain evidence="14">ATCC 50803 / WB clone C6</strain>
    </source>
</reference>
<reference key="3">
    <citation type="journal article" date="2008" name="Mol. Biol. Cell">
        <title>High-resolution crystal structure and in vivo function of a kinesin-2 homologue in Giardia intestinalis.</title>
        <authorList>
            <person name="Hoeng J.C."/>
            <person name="Dawson S.C."/>
            <person name="House S.A."/>
            <person name="Sagolla M.S."/>
            <person name="Pham J.K."/>
            <person name="Mancuso J.J."/>
            <person name="Lowe J."/>
            <person name="Cande W.Z."/>
        </authorList>
    </citation>
    <scope>SUBCELLULAR LOCATION</scope>
    <source>
        <strain evidence="7">ATCC 50803 / WB clone C6</strain>
    </source>
</reference>
<reference key="4">
    <citation type="journal article" date="2009" name="Eukaryot. Cell">
        <title>Using morpholinos for gene knockdown in Giardia intestinalis.</title>
        <authorList>
            <person name="Carpenter M.L."/>
            <person name="Cande W.Z."/>
        </authorList>
    </citation>
    <scope>FUNCTION</scope>
    <scope>DISRUPTION PHENOTYPE</scope>
    <source>
        <strain evidence="8">ATCC 50803 / WB clone C6</strain>
    </source>
</reference>
<reference key="5">
    <citation type="journal article" date="2019" name="Elife">
        <title>Length-dependent disassembly maintains four different flagellar lengths in Giardia.</title>
        <authorList>
            <person name="McInally S.G."/>
            <person name="Kondev J."/>
            <person name="Dawson S.C."/>
        </authorList>
    </citation>
    <scope>FUNCTION</scope>
    <scope>SUBCELLULAR LOCATION</scope>
    <source>
        <strain evidence="9">ATCC 50803 / WB clone C6</strain>
    </source>
</reference>
<proteinExistence type="inferred from homology"/>
<gene>
    <name evidence="7" type="primary">kin-2b</name>
    <name evidence="14" type="ORF">GL50803_0016456</name>
    <name evidence="13" type="ORF">GL50803_16456</name>
</gene>
<evidence type="ECO:0000250" key="1">
    <source>
        <dbReference type="UniProtKB" id="A8BKD1"/>
    </source>
</evidence>
<evidence type="ECO:0000255" key="2"/>
<evidence type="ECO:0000255" key="3">
    <source>
        <dbReference type="PROSITE-ProRule" id="PRU00283"/>
    </source>
</evidence>
<evidence type="ECO:0000269" key="4">
    <source>
    </source>
</evidence>
<evidence type="ECO:0000269" key="5">
    <source>
    </source>
</evidence>
<evidence type="ECO:0000269" key="6">
    <source>
    </source>
</evidence>
<evidence type="ECO:0000303" key="7">
    <source>
    </source>
</evidence>
<evidence type="ECO:0000303" key="8">
    <source>
    </source>
</evidence>
<evidence type="ECO:0000303" key="9">
    <source>
    </source>
</evidence>
<evidence type="ECO:0000305" key="10"/>
<evidence type="ECO:0000305" key="11">
    <source>
    </source>
</evidence>
<evidence type="ECO:0000305" key="12">
    <source>
    </source>
</evidence>
<evidence type="ECO:0000312" key="13">
    <source>
        <dbReference type="EMBL" id="EDO80562.1"/>
    </source>
</evidence>
<evidence type="ECO:0000312" key="14">
    <source>
        <dbReference type="EMBL" id="KAE8302057.1"/>
    </source>
</evidence>
<evidence type="ECO:0000312" key="15">
    <source>
        <dbReference type="Proteomes" id="UP000001548"/>
    </source>
</evidence>
<accession>A8BB91</accession>